<feature type="chain" id="PRO_1000127625" description="Ribulokinase">
    <location>
        <begin position="1"/>
        <end position="564"/>
    </location>
</feature>
<sequence>MGKKYVIGIDYGTESGRAVLVDLEGNEIADHVTPYPHGVIDEVLPESNVQLEPDWALQHPGDYIEVLATAVPAVLQKSGVNPADVIGVGIDFTACTMLPIAGSGEPLCLKPEFKHRPHSWVKLWKHHAAQDEANLLNEMAAKRGEAFLPRYGGKISSEWMIAKIWQILNEDPDIYDQTDLFLEATDWVIFKMTGQLVRNSCTAGYKSIWHKQDGYPSKEFFRALDPRLEHVTETKLRGSIVPLGTRAGVLTKEMAAMMGLLPGTAVAVGNVDAHAAVPGVGVVEPGKMVMAMGTSICHMLLGTEEKYVEGMCGVVEDGIIPGYFGYEAGQSAVGDIFAWYVEQSVPAYVKEAAEKEGVSVHEWLEKRAAAYRPGETGLLALDWWNGNRSVLVDTDLTGLIIGYTLLTKPEEIYRALLEATAFGTRKIIDAFVESGINVDELYACGGLPQKNKLLMQIYADVTNREIKIAASKQTPAVGAAMFAAVAAGKENGGYESIIEAARNMGKVREETFKPIPENVAIYEQLYQEYTKLHDYFGRGENDVMKRLKHWKETARAVKESISLS</sequence>
<organism>
    <name type="scientific">Anoxybacillus flavithermus (strain DSM 21510 / WK1)</name>
    <dbReference type="NCBI Taxonomy" id="491915"/>
    <lineage>
        <taxon>Bacteria</taxon>
        <taxon>Bacillati</taxon>
        <taxon>Bacillota</taxon>
        <taxon>Bacilli</taxon>
        <taxon>Bacillales</taxon>
        <taxon>Anoxybacillaceae</taxon>
        <taxon>Anoxybacillus</taxon>
    </lineage>
</organism>
<gene>
    <name evidence="1" type="primary">araB</name>
    <name type="ordered locus">Aflv_0530</name>
</gene>
<dbReference type="EC" id="2.7.1.16" evidence="1"/>
<dbReference type="EMBL" id="CP000922">
    <property type="protein sequence ID" value="ACJ32914.1"/>
    <property type="molecule type" value="Genomic_DNA"/>
</dbReference>
<dbReference type="RefSeq" id="WP_012574229.1">
    <property type="nucleotide sequence ID" value="NC_011567.1"/>
</dbReference>
<dbReference type="SMR" id="B7GGV9"/>
<dbReference type="STRING" id="491915.Aflv_0530"/>
<dbReference type="GeneID" id="7036787"/>
<dbReference type="KEGG" id="afl:Aflv_0530"/>
<dbReference type="PATRIC" id="fig|491915.6.peg.543"/>
<dbReference type="eggNOG" id="COG1069">
    <property type="taxonomic scope" value="Bacteria"/>
</dbReference>
<dbReference type="HOGENOM" id="CLU_009281_9_1_9"/>
<dbReference type="UniPathway" id="UPA00145">
    <property type="reaction ID" value="UER00566"/>
</dbReference>
<dbReference type="Proteomes" id="UP000000742">
    <property type="component" value="Chromosome"/>
</dbReference>
<dbReference type="GO" id="GO:0005737">
    <property type="term" value="C:cytoplasm"/>
    <property type="evidence" value="ECO:0007669"/>
    <property type="project" value="TreeGrafter"/>
</dbReference>
<dbReference type="GO" id="GO:0005524">
    <property type="term" value="F:ATP binding"/>
    <property type="evidence" value="ECO:0007669"/>
    <property type="project" value="UniProtKB-KW"/>
</dbReference>
<dbReference type="GO" id="GO:0019150">
    <property type="term" value="F:D-ribulokinase activity"/>
    <property type="evidence" value="ECO:0007669"/>
    <property type="project" value="TreeGrafter"/>
</dbReference>
<dbReference type="GO" id="GO:0008741">
    <property type="term" value="F:ribulokinase activity"/>
    <property type="evidence" value="ECO:0007669"/>
    <property type="project" value="UniProtKB-UniRule"/>
</dbReference>
<dbReference type="GO" id="GO:0019569">
    <property type="term" value="P:L-arabinose catabolic process to xylulose 5-phosphate"/>
    <property type="evidence" value="ECO:0007669"/>
    <property type="project" value="UniProtKB-UniRule"/>
</dbReference>
<dbReference type="CDD" id="cd07781">
    <property type="entry name" value="ASKHA_NBD_FGGY_L-RBK"/>
    <property type="match status" value="1"/>
</dbReference>
<dbReference type="Gene3D" id="3.30.420.40">
    <property type="match status" value="2"/>
</dbReference>
<dbReference type="HAMAP" id="MF_00520">
    <property type="entry name" value="Ribulokinase"/>
    <property type="match status" value="1"/>
</dbReference>
<dbReference type="InterPro" id="IPR043129">
    <property type="entry name" value="ATPase_NBD"/>
</dbReference>
<dbReference type="InterPro" id="IPR000577">
    <property type="entry name" value="Carb_kinase_FGGY"/>
</dbReference>
<dbReference type="InterPro" id="IPR018485">
    <property type="entry name" value="FGGY_C"/>
</dbReference>
<dbReference type="InterPro" id="IPR018484">
    <property type="entry name" value="FGGY_N"/>
</dbReference>
<dbReference type="InterPro" id="IPR005929">
    <property type="entry name" value="Ribulokinase"/>
</dbReference>
<dbReference type="NCBIfam" id="TIGR01234">
    <property type="entry name" value="L-ribulokinase"/>
    <property type="match status" value="1"/>
</dbReference>
<dbReference type="NCBIfam" id="NF003154">
    <property type="entry name" value="PRK04123.1"/>
    <property type="match status" value="1"/>
</dbReference>
<dbReference type="PANTHER" id="PTHR43435:SF4">
    <property type="entry name" value="FGGY CARBOHYDRATE KINASE DOMAIN-CONTAINING PROTEIN"/>
    <property type="match status" value="1"/>
</dbReference>
<dbReference type="PANTHER" id="PTHR43435">
    <property type="entry name" value="RIBULOKINASE"/>
    <property type="match status" value="1"/>
</dbReference>
<dbReference type="Pfam" id="PF02782">
    <property type="entry name" value="FGGY_C"/>
    <property type="match status" value="1"/>
</dbReference>
<dbReference type="Pfam" id="PF00370">
    <property type="entry name" value="FGGY_N"/>
    <property type="match status" value="1"/>
</dbReference>
<dbReference type="PIRSF" id="PIRSF000538">
    <property type="entry name" value="GlpK"/>
    <property type="match status" value="1"/>
</dbReference>
<dbReference type="SUPFAM" id="SSF53067">
    <property type="entry name" value="Actin-like ATPase domain"/>
    <property type="match status" value="2"/>
</dbReference>
<proteinExistence type="inferred from homology"/>
<reference key="1">
    <citation type="journal article" date="2008" name="Genome Biol.">
        <title>Encapsulated in silica: genome, proteome and physiology of the thermophilic bacterium Anoxybacillus flavithermus WK1.</title>
        <authorList>
            <person name="Saw J.H."/>
            <person name="Mountain B.W."/>
            <person name="Feng L."/>
            <person name="Omelchenko M.V."/>
            <person name="Hou S."/>
            <person name="Saito J.A."/>
            <person name="Stott M.B."/>
            <person name="Li D."/>
            <person name="Zhao G."/>
            <person name="Wu J."/>
            <person name="Galperin M.Y."/>
            <person name="Koonin E.V."/>
            <person name="Makarova K.S."/>
            <person name="Wolf Y.I."/>
            <person name="Rigden D.J."/>
            <person name="Dunfield P.F."/>
            <person name="Wang L."/>
            <person name="Alam M."/>
        </authorList>
    </citation>
    <scope>NUCLEOTIDE SEQUENCE [LARGE SCALE GENOMIC DNA]</scope>
    <source>
        <strain>DSM 21510 / WK1</strain>
    </source>
</reference>
<accession>B7GGV9</accession>
<keyword id="KW-0054">Arabinose catabolism</keyword>
<keyword id="KW-0067">ATP-binding</keyword>
<keyword id="KW-0119">Carbohydrate metabolism</keyword>
<keyword id="KW-0418">Kinase</keyword>
<keyword id="KW-0547">Nucleotide-binding</keyword>
<keyword id="KW-0808">Transferase</keyword>
<evidence type="ECO:0000255" key="1">
    <source>
        <dbReference type="HAMAP-Rule" id="MF_00520"/>
    </source>
</evidence>
<protein>
    <recommendedName>
        <fullName evidence="1">Ribulokinase</fullName>
        <ecNumber evidence="1">2.7.1.16</ecNumber>
    </recommendedName>
</protein>
<name>ARAB_ANOFW</name>
<comment type="catalytic activity">
    <reaction evidence="1">
        <text>D-ribulose + ATP = D-ribulose 5-phosphate + ADP + H(+)</text>
        <dbReference type="Rhea" id="RHEA:17601"/>
        <dbReference type="ChEBI" id="CHEBI:15378"/>
        <dbReference type="ChEBI" id="CHEBI:17173"/>
        <dbReference type="ChEBI" id="CHEBI:30616"/>
        <dbReference type="ChEBI" id="CHEBI:58121"/>
        <dbReference type="ChEBI" id="CHEBI:456216"/>
        <dbReference type="EC" id="2.7.1.16"/>
    </reaction>
</comment>
<comment type="catalytic activity">
    <reaction evidence="1">
        <text>L-ribulose + ATP = L-ribulose 5-phosphate + ADP + H(+)</text>
        <dbReference type="Rhea" id="RHEA:22072"/>
        <dbReference type="ChEBI" id="CHEBI:15378"/>
        <dbReference type="ChEBI" id="CHEBI:16880"/>
        <dbReference type="ChEBI" id="CHEBI:30616"/>
        <dbReference type="ChEBI" id="CHEBI:58226"/>
        <dbReference type="ChEBI" id="CHEBI:456216"/>
        <dbReference type="EC" id="2.7.1.16"/>
    </reaction>
</comment>
<comment type="pathway">
    <text evidence="1">Carbohydrate degradation; L-arabinose degradation via L-ribulose; D-xylulose 5-phosphate from L-arabinose (bacterial route): step 2/3.</text>
</comment>
<comment type="similarity">
    <text evidence="1">Belongs to the ribulokinase family.</text>
</comment>